<evidence type="ECO:0000255" key="1">
    <source>
        <dbReference type="HAMAP-Rule" id="MF_00829"/>
    </source>
</evidence>
<organism>
    <name type="scientific">Staphylococcus aureus (strain N315)</name>
    <dbReference type="NCBI Taxonomy" id="158879"/>
    <lineage>
        <taxon>Bacteria</taxon>
        <taxon>Bacillati</taxon>
        <taxon>Bacillota</taxon>
        <taxon>Bacilli</taxon>
        <taxon>Bacillales</taxon>
        <taxon>Staphylococcaceae</taxon>
        <taxon>Staphylococcus</taxon>
    </lineage>
</organism>
<feature type="chain" id="PRO_0000291421" description="UPF0435 protein SA1696">
    <location>
        <begin position="1"/>
        <end position="68"/>
    </location>
</feature>
<protein>
    <recommendedName>
        <fullName evidence="1">UPF0435 protein SA1696</fullName>
    </recommendedName>
</protein>
<dbReference type="EMBL" id="BA000018">
    <property type="protein sequence ID" value="BAB42966.1"/>
    <property type="molecule type" value="Genomic_DNA"/>
</dbReference>
<dbReference type="PIR" id="G89975">
    <property type="entry name" value="G89975"/>
</dbReference>
<dbReference type="SMR" id="Q7A4S2"/>
<dbReference type="EnsemblBacteria" id="BAB42966">
    <property type="protein sequence ID" value="BAB42966"/>
    <property type="gene ID" value="BAB42966"/>
</dbReference>
<dbReference type="KEGG" id="sau:SA1696"/>
<dbReference type="HOGENOM" id="CLU_199533_0_0_9"/>
<dbReference type="HAMAP" id="MF_00829">
    <property type="entry name" value="UPF0435"/>
    <property type="match status" value="1"/>
</dbReference>
<dbReference type="InterPro" id="IPR009507">
    <property type="entry name" value="UPF0435"/>
</dbReference>
<dbReference type="Pfam" id="PF06569">
    <property type="entry name" value="DUF1128"/>
    <property type="match status" value="1"/>
</dbReference>
<name>Y1696_STAAN</name>
<accession>Q7A4S2</accession>
<gene>
    <name type="ordered locus">SA1696</name>
</gene>
<sequence>MAMTNEEKVLAIREKLNIVNQGLLDPEKYKNANEEELTDIYDFVQSRERLSPSEVTAIADALGQLRHD</sequence>
<comment type="similarity">
    <text evidence="1">Belongs to the UPF0435 family.</text>
</comment>
<proteinExistence type="evidence at protein level"/>
<reference key="1">
    <citation type="journal article" date="2001" name="Lancet">
        <title>Whole genome sequencing of meticillin-resistant Staphylococcus aureus.</title>
        <authorList>
            <person name="Kuroda M."/>
            <person name="Ohta T."/>
            <person name="Uchiyama I."/>
            <person name="Baba T."/>
            <person name="Yuzawa H."/>
            <person name="Kobayashi I."/>
            <person name="Cui L."/>
            <person name="Oguchi A."/>
            <person name="Aoki K."/>
            <person name="Nagai Y."/>
            <person name="Lian J.-Q."/>
            <person name="Ito T."/>
            <person name="Kanamori M."/>
            <person name="Matsumaru H."/>
            <person name="Maruyama A."/>
            <person name="Murakami H."/>
            <person name="Hosoyama A."/>
            <person name="Mizutani-Ui Y."/>
            <person name="Takahashi N.K."/>
            <person name="Sawano T."/>
            <person name="Inoue R."/>
            <person name="Kaito C."/>
            <person name="Sekimizu K."/>
            <person name="Hirakawa H."/>
            <person name="Kuhara S."/>
            <person name="Goto S."/>
            <person name="Yabuzaki J."/>
            <person name="Kanehisa M."/>
            <person name="Yamashita A."/>
            <person name="Oshima K."/>
            <person name="Furuya K."/>
            <person name="Yoshino C."/>
            <person name="Shiba T."/>
            <person name="Hattori M."/>
            <person name="Ogasawara N."/>
            <person name="Hayashi H."/>
            <person name="Hiramatsu K."/>
        </authorList>
    </citation>
    <scope>NUCLEOTIDE SEQUENCE [LARGE SCALE GENOMIC DNA]</scope>
    <source>
        <strain>N315</strain>
    </source>
</reference>
<reference key="2">
    <citation type="submission" date="2007-10" db="UniProtKB">
        <title>Shotgun proteomic analysis of total and membrane protein extracts of S. aureus strain N315.</title>
        <authorList>
            <person name="Vaezzadeh A.R."/>
            <person name="Deshusses J."/>
            <person name="Lescuyer P."/>
            <person name="Hochstrasser D.F."/>
        </authorList>
    </citation>
    <scope>IDENTIFICATION BY MASS SPECTROMETRY [LARGE SCALE ANALYSIS]</scope>
    <source>
        <strain>N315</strain>
    </source>
</reference>